<accession>A6LHR9</accession>
<reference key="1">
    <citation type="journal article" date="2007" name="PLoS Biol.">
        <title>Evolution of symbiotic bacteria in the distal human intestine.</title>
        <authorList>
            <person name="Xu J."/>
            <person name="Mahowald M.A."/>
            <person name="Ley R.E."/>
            <person name="Lozupone C.A."/>
            <person name="Hamady M."/>
            <person name="Martens E.C."/>
            <person name="Henrissat B."/>
            <person name="Coutinho P.M."/>
            <person name="Minx P."/>
            <person name="Latreille P."/>
            <person name="Cordum H."/>
            <person name="Van Brunt A."/>
            <person name="Kim K."/>
            <person name="Fulton R.S."/>
            <person name="Fulton L.A."/>
            <person name="Clifton S.W."/>
            <person name="Wilson R.K."/>
            <person name="Knight R.D."/>
            <person name="Gordon J.I."/>
        </authorList>
    </citation>
    <scope>NUCLEOTIDE SEQUENCE [LARGE SCALE GENOMIC DNA]</scope>
    <source>
        <strain>ATCC 8503 / DSM 20701 / CIP 104284 / JCM 5825 / NCTC 11152</strain>
    </source>
</reference>
<proteinExistence type="inferred from homology"/>
<gene>
    <name evidence="1" type="primary">rimP</name>
    <name type="ordered locus">BDI_3532</name>
</gene>
<name>RIMP_PARD8</name>
<sequence length="155" mass="17460">MIEKKVVSQLIEEKLASSSNYLVDVVIKPGNLIVVEIDNDEAVSIDDCAELSRYLEEHLDRDVEDYELEVGSAGITSPFKVLRQYVKNIGNEVEMLLKNGSKLTGVLKSADENGVVVSVEKKVKPEGAKRKVTVVEDESYTFDEIKYTKYLIRFK</sequence>
<organism>
    <name type="scientific">Parabacteroides distasonis (strain ATCC 8503 / DSM 20701 / CIP 104284 / JCM 5825 / NCTC 11152)</name>
    <dbReference type="NCBI Taxonomy" id="435591"/>
    <lineage>
        <taxon>Bacteria</taxon>
        <taxon>Pseudomonadati</taxon>
        <taxon>Bacteroidota</taxon>
        <taxon>Bacteroidia</taxon>
        <taxon>Bacteroidales</taxon>
        <taxon>Tannerellaceae</taxon>
        <taxon>Parabacteroides</taxon>
    </lineage>
</organism>
<dbReference type="EMBL" id="CP000140">
    <property type="protein sequence ID" value="ABR45233.1"/>
    <property type="molecule type" value="Genomic_DNA"/>
</dbReference>
<dbReference type="SMR" id="A6LHR9"/>
<dbReference type="STRING" id="435591.BDI_3532"/>
<dbReference type="PaxDb" id="435591-BDI_3532"/>
<dbReference type="KEGG" id="pdi:BDI_3532"/>
<dbReference type="eggNOG" id="COG0779">
    <property type="taxonomic scope" value="Bacteria"/>
</dbReference>
<dbReference type="HOGENOM" id="CLU_070525_3_1_10"/>
<dbReference type="Proteomes" id="UP000000566">
    <property type="component" value="Chromosome"/>
</dbReference>
<dbReference type="GO" id="GO:0005829">
    <property type="term" value="C:cytosol"/>
    <property type="evidence" value="ECO:0007669"/>
    <property type="project" value="TreeGrafter"/>
</dbReference>
<dbReference type="GO" id="GO:0000028">
    <property type="term" value="P:ribosomal small subunit assembly"/>
    <property type="evidence" value="ECO:0007669"/>
    <property type="project" value="TreeGrafter"/>
</dbReference>
<dbReference type="GO" id="GO:0006412">
    <property type="term" value="P:translation"/>
    <property type="evidence" value="ECO:0007669"/>
    <property type="project" value="TreeGrafter"/>
</dbReference>
<dbReference type="Gene3D" id="3.30.300.70">
    <property type="entry name" value="RimP-like superfamily, N-terminal"/>
    <property type="match status" value="1"/>
</dbReference>
<dbReference type="HAMAP" id="MF_01077">
    <property type="entry name" value="RimP"/>
    <property type="match status" value="1"/>
</dbReference>
<dbReference type="InterPro" id="IPR003728">
    <property type="entry name" value="Ribosome_maturation_RimP"/>
</dbReference>
<dbReference type="InterPro" id="IPR028998">
    <property type="entry name" value="RimP_C"/>
</dbReference>
<dbReference type="InterPro" id="IPR028989">
    <property type="entry name" value="RimP_N"/>
</dbReference>
<dbReference type="InterPro" id="IPR035956">
    <property type="entry name" value="RimP_N_sf"/>
</dbReference>
<dbReference type="NCBIfam" id="NF002531">
    <property type="entry name" value="PRK02001.1"/>
    <property type="match status" value="1"/>
</dbReference>
<dbReference type="PANTHER" id="PTHR33867">
    <property type="entry name" value="RIBOSOME MATURATION FACTOR RIMP"/>
    <property type="match status" value="1"/>
</dbReference>
<dbReference type="PANTHER" id="PTHR33867:SF1">
    <property type="entry name" value="RIBOSOME MATURATION FACTOR RIMP"/>
    <property type="match status" value="1"/>
</dbReference>
<dbReference type="Pfam" id="PF17384">
    <property type="entry name" value="DUF150_C"/>
    <property type="match status" value="1"/>
</dbReference>
<dbReference type="Pfam" id="PF02576">
    <property type="entry name" value="RimP_N"/>
    <property type="match status" value="1"/>
</dbReference>
<dbReference type="SUPFAM" id="SSF75420">
    <property type="entry name" value="YhbC-like, N-terminal domain"/>
    <property type="match status" value="1"/>
</dbReference>
<protein>
    <recommendedName>
        <fullName evidence="1">Ribosome maturation factor RimP</fullName>
    </recommendedName>
</protein>
<comment type="function">
    <text evidence="1">Required for maturation of 30S ribosomal subunits.</text>
</comment>
<comment type="subcellular location">
    <subcellularLocation>
        <location evidence="1">Cytoplasm</location>
    </subcellularLocation>
</comment>
<comment type="similarity">
    <text evidence="1">Belongs to the RimP family.</text>
</comment>
<keyword id="KW-0963">Cytoplasm</keyword>
<keyword id="KW-1185">Reference proteome</keyword>
<keyword id="KW-0690">Ribosome biogenesis</keyword>
<feature type="chain" id="PRO_1000064741" description="Ribosome maturation factor RimP">
    <location>
        <begin position="1"/>
        <end position="155"/>
    </location>
</feature>
<evidence type="ECO:0000255" key="1">
    <source>
        <dbReference type="HAMAP-Rule" id="MF_01077"/>
    </source>
</evidence>